<keyword id="KW-0255">Endonuclease</keyword>
<keyword id="KW-0378">Hydrolase</keyword>
<keyword id="KW-0540">Nuclease</keyword>
<keyword id="KW-0694">RNA-binding</keyword>
<keyword id="KW-0819">tRNA processing</keyword>
<name>RNPA_PSEE4</name>
<protein>
    <recommendedName>
        <fullName evidence="1">Ribonuclease P protein component</fullName>
        <shortName evidence="1">RNase P protein</shortName>
        <shortName evidence="1">RNaseP protein</shortName>
        <ecNumber evidence="1">3.1.26.5</ecNumber>
    </recommendedName>
    <alternativeName>
        <fullName evidence="1">Protein C5</fullName>
    </alternativeName>
</protein>
<dbReference type="EC" id="3.1.26.5" evidence="1"/>
<dbReference type="EMBL" id="CT573326">
    <property type="protein sequence ID" value="CAK18164.1"/>
    <property type="molecule type" value="Genomic_DNA"/>
</dbReference>
<dbReference type="RefSeq" id="WP_011536515.1">
    <property type="nucleotide sequence ID" value="NC_008027.1"/>
</dbReference>
<dbReference type="SMR" id="Q1I2H2"/>
<dbReference type="STRING" id="384676.PSEEN5558"/>
<dbReference type="GeneID" id="58770969"/>
<dbReference type="KEGG" id="pen:PSEEN5558"/>
<dbReference type="eggNOG" id="COG0594">
    <property type="taxonomic scope" value="Bacteria"/>
</dbReference>
<dbReference type="HOGENOM" id="CLU_117179_11_0_6"/>
<dbReference type="OrthoDB" id="9796422at2"/>
<dbReference type="Proteomes" id="UP000000658">
    <property type="component" value="Chromosome"/>
</dbReference>
<dbReference type="GO" id="GO:0030677">
    <property type="term" value="C:ribonuclease P complex"/>
    <property type="evidence" value="ECO:0007669"/>
    <property type="project" value="TreeGrafter"/>
</dbReference>
<dbReference type="GO" id="GO:0042781">
    <property type="term" value="F:3'-tRNA processing endoribonuclease activity"/>
    <property type="evidence" value="ECO:0007669"/>
    <property type="project" value="TreeGrafter"/>
</dbReference>
<dbReference type="GO" id="GO:0004526">
    <property type="term" value="F:ribonuclease P activity"/>
    <property type="evidence" value="ECO:0007669"/>
    <property type="project" value="UniProtKB-UniRule"/>
</dbReference>
<dbReference type="GO" id="GO:0000049">
    <property type="term" value="F:tRNA binding"/>
    <property type="evidence" value="ECO:0007669"/>
    <property type="project" value="UniProtKB-UniRule"/>
</dbReference>
<dbReference type="GO" id="GO:0001682">
    <property type="term" value="P:tRNA 5'-leader removal"/>
    <property type="evidence" value="ECO:0007669"/>
    <property type="project" value="UniProtKB-UniRule"/>
</dbReference>
<dbReference type="Gene3D" id="3.30.230.10">
    <property type="match status" value="1"/>
</dbReference>
<dbReference type="HAMAP" id="MF_00227">
    <property type="entry name" value="RNase_P"/>
    <property type="match status" value="1"/>
</dbReference>
<dbReference type="InterPro" id="IPR020568">
    <property type="entry name" value="Ribosomal_Su5_D2-typ_SF"/>
</dbReference>
<dbReference type="InterPro" id="IPR014721">
    <property type="entry name" value="Ribsml_uS5_D2-typ_fold_subgr"/>
</dbReference>
<dbReference type="InterPro" id="IPR000100">
    <property type="entry name" value="RNase_P"/>
</dbReference>
<dbReference type="InterPro" id="IPR020539">
    <property type="entry name" value="RNase_P_CS"/>
</dbReference>
<dbReference type="NCBIfam" id="TIGR00188">
    <property type="entry name" value="rnpA"/>
    <property type="match status" value="1"/>
</dbReference>
<dbReference type="PANTHER" id="PTHR33992">
    <property type="entry name" value="RIBONUCLEASE P PROTEIN COMPONENT"/>
    <property type="match status" value="1"/>
</dbReference>
<dbReference type="PANTHER" id="PTHR33992:SF1">
    <property type="entry name" value="RIBONUCLEASE P PROTEIN COMPONENT"/>
    <property type="match status" value="1"/>
</dbReference>
<dbReference type="Pfam" id="PF00825">
    <property type="entry name" value="Ribonuclease_P"/>
    <property type="match status" value="1"/>
</dbReference>
<dbReference type="SUPFAM" id="SSF54211">
    <property type="entry name" value="Ribosomal protein S5 domain 2-like"/>
    <property type="match status" value="1"/>
</dbReference>
<dbReference type="PROSITE" id="PS00648">
    <property type="entry name" value="RIBONUCLEASE_P"/>
    <property type="match status" value="1"/>
</dbReference>
<reference key="1">
    <citation type="journal article" date="2006" name="Nat. Biotechnol.">
        <title>Complete genome sequence of the entomopathogenic and metabolically versatile soil bacterium Pseudomonas entomophila.</title>
        <authorList>
            <person name="Vodovar N."/>
            <person name="Vallenet D."/>
            <person name="Cruveiller S."/>
            <person name="Rouy Z."/>
            <person name="Barbe V."/>
            <person name="Acosta C."/>
            <person name="Cattolico L."/>
            <person name="Jubin C."/>
            <person name="Lajus A."/>
            <person name="Segurens B."/>
            <person name="Vacherie B."/>
            <person name="Wincker P."/>
            <person name="Weissenbach J."/>
            <person name="Lemaitre B."/>
            <person name="Medigue C."/>
            <person name="Boccard F."/>
        </authorList>
    </citation>
    <scope>NUCLEOTIDE SEQUENCE [LARGE SCALE GENOMIC DNA]</scope>
    <source>
        <strain>L48</strain>
    </source>
</reference>
<accession>Q1I2H2</accession>
<sequence length="133" mass="14933">MVSQDFSRDKRLLTPRHFKAVFDSPTGKVPGKNLLILARENGLDHPRLGLVIGKKSVKLAVQRNRLKRLMRDSFRLNQQMLAGLDIVIVARKGLGEVENPELHQHFGKLWKRLVRSRPSPAVADSAGVDSHNA</sequence>
<proteinExistence type="inferred from homology"/>
<organism>
    <name type="scientific">Pseudomonas entomophila (strain L48)</name>
    <dbReference type="NCBI Taxonomy" id="384676"/>
    <lineage>
        <taxon>Bacteria</taxon>
        <taxon>Pseudomonadati</taxon>
        <taxon>Pseudomonadota</taxon>
        <taxon>Gammaproteobacteria</taxon>
        <taxon>Pseudomonadales</taxon>
        <taxon>Pseudomonadaceae</taxon>
        <taxon>Pseudomonas</taxon>
    </lineage>
</organism>
<comment type="function">
    <text evidence="1">RNaseP catalyzes the removal of the 5'-leader sequence from pre-tRNA to produce the mature 5'-terminus. It can also cleave other RNA substrates such as 4.5S RNA. The protein component plays an auxiliary but essential role in vivo by binding to the 5'-leader sequence and broadening the substrate specificity of the ribozyme.</text>
</comment>
<comment type="catalytic activity">
    <reaction evidence="1">
        <text>Endonucleolytic cleavage of RNA, removing 5'-extranucleotides from tRNA precursor.</text>
        <dbReference type="EC" id="3.1.26.5"/>
    </reaction>
</comment>
<comment type="subunit">
    <text evidence="1">Consists of a catalytic RNA component (M1 or rnpB) and a protein subunit.</text>
</comment>
<comment type="similarity">
    <text evidence="1">Belongs to the RnpA family.</text>
</comment>
<gene>
    <name evidence="1" type="primary">rnpA</name>
    <name type="ordered locus">PSEEN5558</name>
</gene>
<feature type="chain" id="PRO_1000194666" description="Ribonuclease P protein component">
    <location>
        <begin position="1"/>
        <end position="133"/>
    </location>
</feature>
<evidence type="ECO:0000255" key="1">
    <source>
        <dbReference type="HAMAP-Rule" id="MF_00227"/>
    </source>
</evidence>